<sequence>MQINPTTSGTAVSQLEEKNLGRVAQIIGPVLDVVFPPGKMPNIYNALVVKGQDADGQEIKVTCEVQQLLGNNRVRAVAMSATDGLTRGMDVIDTGAPLSVPVGGATLGRIFNVLGEPVDNLGPVDTRTTSPIHRSAPAFIQLDTKLAIFETGIKVVDLLAPYRRGGKIGLFGGAGVGKTVLIMELINNIAKAHGGVSVFGGVGERTREGNDLYMEMKESGVINEKNITESKVALVYGQMNEPPGARMRVGLTALTMAEYFRDVNEQDVLLFIDNIFRFVQAGSEVSALLGRMPSAVGYQPTLSTEMGSLQERITSTKEGSITSIQAVYVPADDLTDPAPATTFAHLDATTVLSRGLAAKGIYPAVDPLDSTSTMLQPGIVGEDHYETAQRVKETLQRYKELQDIIAILGLDELSEEDRLTVARARKIERFLSQPFFVAEVFTGSPGKYVGLEETIRGFKLILSGELDSLPEQAFYLVGNIDEATAKAINLEVESKLKK</sequence>
<gene>
    <name evidence="1" type="primary">atpB</name>
</gene>
<keyword id="KW-0066">ATP synthesis</keyword>
<keyword id="KW-0067">ATP-binding</keyword>
<keyword id="KW-0139">CF(1)</keyword>
<keyword id="KW-0150">Chloroplast</keyword>
<keyword id="KW-0375">Hydrogen ion transport</keyword>
<keyword id="KW-0406">Ion transport</keyword>
<keyword id="KW-0472">Membrane</keyword>
<keyword id="KW-0547">Nucleotide-binding</keyword>
<keyword id="KW-0934">Plastid</keyword>
<keyword id="KW-0793">Thylakoid</keyword>
<keyword id="KW-1278">Translocase</keyword>
<keyword id="KW-0813">Transport</keyword>
<accession>A9L9A3</accession>
<comment type="function">
    <text evidence="1">Produces ATP from ADP in the presence of a proton gradient across the membrane. The catalytic sites are hosted primarily by the beta subunits.</text>
</comment>
<comment type="catalytic activity">
    <reaction evidence="1">
        <text>ATP + H2O + 4 H(+)(in) = ADP + phosphate + 5 H(+)(out)</text>
        <dbReference type="Rhea" id="RHEA:57720"/>
        <dbReference type="ChEBI" id="CHEBI:15377"/>
        <dbReference type="ChEBI" id="CHEBI:15378"/>
        <dbReference type="ChEBI" id="CHEBI:30616"/>
        <dbReference type="ChEBI" id="CHEBI:43474"/>
        <dbReference type="ChEBI" id="CHEBI:456216"/>
        <dbReference type="EC" id="7.1.2.2"/>
    </reaction>
</comment>
<comment type="subunit">
    <text evidence="1">F-type ATPases have 2 components, CF(1) - the catalytic core - and CF(0) - the membrane proton channel. CF(1) has five subunits: alpha(3), beta(3), gamma(1), delta(1), epsilon(1). CF(0) has four main subunits: a(1), b(1), b'(1) and c(9-12).</text>
</comment>
<comment type="subcellular location">
    <subcellularLocation>
        <location evidence="1">Plastid</location>
        <location evidence="1">Chloroplast thylakoid membrane</location>
        <topology evidence="1">Peripheral membrane protein</topology>
    </subcellularLocation>
</comment>
<comment type="similarity">
    <text evidence="1">Belongs to the ATPase alpha/beta chains family.</text>
</comment>
<protein>
    <recommendedName>
        <fullName evidence="1">ATP synthase subunit beta, chloroplastic</fullName>
        <ecNumber evidence="1">7.1.2.2</ecNumber>
    </recommendedName>
    <alternativeName>
        <fullName evidence="1">ATP synthase F1 sector subunit beta</fullName>
    </alternativeName>
    <alternativeName>
        <fullName evidence="1">F-ATPase subunit beta</fullName>
    </alternativeName>
</protein>
<organism>
    <name type="scientific">Lemna minor</name>
    <name type="common">Common duckweed</name>
    <dbReference type="NCBI Taxonomy" id="4472"/>
    <lineage>
        <taxon>Eukaryota</taxon>
        <taxon>Viridiplantae</taxon>
        <taxon>Streptophyta</taxon>
        <taxon>Embryophyta</taxon>
        <taxon>Tracheophyta</taxon>
        <taxon>Spermatophyta</taxon>
        <taxon>Magnoliopsida</taxon>
        <taxon>Liliopsida</taxon>
        <taxon>Araceae</taxon>
        <taxon>Lemnoideae</taxon>
        <taxon>Lemna</taxon>
    </lineage>
</organism>
<dbReference type="EC" id="7.1.2.2" evidence="1"/>
<dbReference type="EMBL" id="DQ400350">
    <property type="protein sequence ID" value="ABD48502.1"/>
    <property type="molecule type" value="Genomic_DNA"/>
</dbReference>
<dbReference type="RefSeq" id="YP_001595515.1">
    <property type="nucleotide sequence ID" value="NC_010109.1"/>
</dbReference>
<dbReference type="SMR" id="A9L9A3"/>
<dbReference type="GeneID" id="5787615"/>
<dbReference type="GO" id="GO:0009535">
    <property type="term" value="C:chloroplast thylakoid membrane"/>
    <property type="evidence" value="ECO:0007669"/>
    <property type="project" value="UniProtKB-SubCell"/>
</dbReference>
<dbReference type="GO" id="GO:0005739">
    <property type="term" value="C:mitochondrion"/>
    <property type="evidence" value="ECO:0007669"/>
    <property type="project" value="GOC"/>
</dbReference>
<dbReference type="GO" id="GO:0045259">
    <property type="term" value="C:proton-transporting ATP synthase complex"/>
    <property type="evidence" value="ECO:0007669"/>
    <property type="project" value="UniProtKB-KW"/>
</dbReference>
<dbReference type="GO" id="GO:0005524">
    <property type="term" value="F:ATP binding"/>
    <property type="evidence" value="ECO:0007669"/>
    <property type="project" value="UniProtKB-UniRule"/>
</dbReference>
<dbReference type="GO" id="GO:0016887">
    <property type="term" value="F:ATP hydrolysis activity"/>
    <property type="evidence" value="ECO:0007669"/>
    <property type="project" value="InterPro"/>
</dbReference>
<dbReference type="GO" id="GO:0046933">
    <property type="term" value="F:proton-transporting ATP synthase activity, rotational mechanism"/>
    <property type="evidence" value="ECO:0007669"/>
    <property type="project" value="UniProtKB-UniRule"/>
</dbReference>
<dbReference type="GO" id="GO:0042776">
    <property type="term" value="P:proton motive force-driven mitochondrial ATP synthesis"/>
    <property type="evidence" value="ECO:0007669"/>
    <property type="project" value="TreeGrafter"/>
</dbReference>
<dbReference type="CDD" id="cd18110">
    <property type="entry name" value="ATP-synt_F1_beta_C"/>
    <property type="match status" value="1"/>
</dbReference>
<dbReference type="CDD" id="cd18115">
    <property type="entry name" value="ATP-synt_F1_beta_N"/>
    <property type="match status" value="1"/>
</dbReference>
<dbReference type="CDD" id="cd01133">
    <property type="entry name" value="F1-ATPase_beta_CD"/>
    <property type="match status" value="1"/>
</dbReference>
<dbReference type="FunFam" id="1.10.1140.10:FF:000001">
    <property type="entry name" value="ATP synthase subunit beta"/>
    <property type="match status" value="1"/>
</dbReference>
<dbReference type="FunFam" id="3.40.50.300:FF:000004">
    <property type="entry name" value="ATP synthase subunit beta"/>
    <property type="match status" value="1"/>
</dbReference>
<dbReference type="FunFam" id="2.40.10.170:FF:000002">
    <property type="entry name" value="ATP synthase subunit beta, chloroplastic"/>
    <property type="match status" value="1"/>
</dbReference>
<dbReference type="Gene3D" id="2.40.10.170">
    <property type="match status" value="1"/>
</dbReference>
<dbReference type="Gene3D" id="1.10.1140.10">
    <property type="entry name" value="Bovine Mitochondrial F1-atpase, Atp Synthase Beta Chain, Chain D, domain 3"/>
    <property type="match status" value="1"/>
</dbReference>
<dbReference type="Gene3D" id="3.40.50.300">
    <property type="entry name" value="P-loop containing nucleotide triphosphate hydrolases"/>
    <property type="match status" value="1"/>
</dbReference>
<dbReference type="HAMAP" id="MF_01347">
    <property type="entry name" value="ATP_synth_beta_bact"/>
    <property type="match status" value="1"/>
</dbReference>
<dbReference type="InterPro" id="IPR003593">
    <property type="entry name" value="AAA+_ATPase"/>
</dbReference>
<dbReference type="InterPro" id="IPR055190">
    <property type="entry name" value="ATP-synt_VA_C"/>
</dbReference>
<dbReference type="InterPro" id="IPR005722">
    <property type="entry name" value="ATP_synth_F1_bsu"/>
</dbReference>
<dbReference type="InterPro" id="IPR020003">
    <property type="entry name" value="ATPase_a/bsu_AS"/>
</dbReference>
<dbReference type="InterPro" id="IPR050053">
    <property type="entry name" value="ATPase_alpha/beta_chains"/>
</dbReference>
<dbReference type="InterPro" id="IPR004100">
    <property type="entry name" value="ATPase_F1/V1/A1_a/bsu_N"/>
</dbReference>
<dbReference type="InterPro" id="IPR036121">
    <property type="entry name" value="ATPase_F1/V1/A1_a/bsu_N_sf"/>
</dbReference>
<dbReference type="InterPro" id="IPR000194">
    <property type="entry name" value="ATPase_F1/V1/A1_a/bsu_nucl-bd"/>
</dbReference>
<dbReference type="InterPro" id="IPR024034">
    <property type="entry name" value="ATPase_F1/V1_b/a_C"/>
</dbReference>
<dbReference type="InterPro" id="IPR027417">
    <property type="entry name" value="P-loop_NTPase"/>
</dbReference>
<dbReference type="NCBIfam" id="TIGR01039">
    <property type="entry name" value="atpD"/>
    <property type="match status" value="1"/>
</dbReference>
<dbReference type="PANTHER" id="PTHR15184">
    <property type="entry name" value="ATP SYNTHASE"/>
    <property type="match status" value="1"/>
</dbReference>
<dbReference type="PANTHER" id="PTHR15184:SF71">
    <property type="entry name" value="ATP SYNTHASE SUBUNIT BETA, MITOCHONDRIAL"/>
    <property type="match status" value="1"/>
</dbReference>
<dbReference type="Pfam" id="PF00006">
    <property type="entry name" value="ATP-synt_ab"/>
    <property type="match status" value="1"/>
</dbReference>
<dbReference type="Pfam" id="PF02874">
    <property type="entry name" value="ATP-synt_ab_N"/>
    <property type="match status" value="1"/>
</dbReference>
<dbReference type="Pfam" id="PF22919">
    <property type="entry name" value="ATP-synt_VA_C"/>
    <property type="match status" value="1"/>
</dbReference>
<dbReference type="SMART" id="SM00382">
    <property type="entry name" value="AAA"/>
    <property type="match status" value="1"/>
</dbReference>
<dbReference type="SUPFAM" id="SSF47917">
    <property type="entry name" value="C-terminal domain of alpha and beta subunits of F1 ATP synthase"/>
    <property type="match status" value="1"/>
</dbReference>
<dbReference type="SUPFAM" id="SSF50615">
    <property type="entry name" value="N-terminal domain of alpha and beta subunits of F1 ATP synthase"/>
    <property type="match status" value="1"/>
</dbReference>
<dbReference type="SUPFAM" id="SSF52540">
    <property type="entry name" value="P-loop containing nucleoside triphosphate hydrolases"/>
    <property type="match status" value="1"/>
</dbReference>
<dbReference type="PROSITE" id="PS00152">
    <property type="entry name" value="ATPASE_ALPHA_BETA"/>
    <property type="match status" value="1"/>
</dbReference>
<name>ATPB_LEMMI</name>
<evidence type="ECO:0000255" key="1">
    <source>
        <dbReference type="HAMAP-Rule" id="MF_01347"/>
    </source>
</evidence>
<reference key="1">
    <citation type="journal article" date="2008" name="J. Mol. Evol.">
        <title>Complete sequence of the Duckweed (Lemna minor) chloroplast genome: structural organization and phylogenetic relationships to other angiosperms.</title>
        <authorList>
            <person name="Mardanov A.V."/>
            <person name="Ravin N.V."/>
            <person name="Kuznetsov B.B."/>
            <person name="Samigullin T.H."/>
            <person name="Antonov A.S."/>
            <person name="Kolganova T.V."/>
            <person name="Skyabin K.G."/>
        </authorList>
    </citation>
    <scope>NUCLEOTIDE SEQUENCE [LARGE SCALE GENOMIC DNA]</scope>
</reference>
<feature type="chain" id="PRO_0000339623" description="ATP synthase subunit beta, chloroplastic">
    <location>
        <begin position="1"/>
        <end position="498"/>
    </location>
</feature>
<feature type="binding site" evidence="1">
    <location>
        <begin position="172"/>
        <end position="179"/>
    </location>
    <ligand>
        <name>ATP</name>
        <dbReference type="ChEBI" id="CHEBI:30616"/>
    </ligand>
</feature>
<proteinExistence type="inferred from homology"/>
<geneLocation type="chloroplast"/>